<comment type="function">
    <text evidence="1">Specifically methylates the N4 position of cytidine in position 1402 (C1402) of 16S rRNA.</text>
</comment>
<comment type="catalytic activity">
    <reaction evidence="1">
        <text>cytidine(1402) in 16S rRNA + S-adenosyl-L-methionine = N(4)-methylcytidine(1402) in 16S rRNA + S-adenosyl-L-homocysteine + H(+)</text>
        <dbReference type="Rhea" id="RHEA:42928"/>
        <dbReference type="Rhea" id="RHEA-COMP:10286"/>
        <dbReference type="Rhea" id="RHEA-COMP:10287"/>
        <dbReference type="ChEBI" id="CHEBI:15378"/>
        <dbReference type="ChEBI" id="CHEBI:57856"/>
        <dbReference type="ChEBI" id="CHEBI:59789"/>
        <dbReference type="ChEBI" id="CHEBI:74506"/>
        <dbReference type="ChEBI" id="CHEBI:82748"/>
        <dbReference type="EC" id="2.1.1.199"/>
    </reaction>
</comment>
<comment type="subcellular location">
    <subcellularLocation>
        <location evidence="1">Cytoplasm</location>
    </subcellularLocation>
</comment>
<comment type="similarity">
    <text evidence="1">Belongs to the methyltransferase superfamily. RsmH family.</text>
</comment>
<reference key="1">
    <citation type="journal article" date="2009" name="PLoS ONE">
        <title>Complete genome sequence of the aerobic CO-oxidizing thermophile Thermomicrobium roseum.</title>
        <authorList>
            <person name="Wu D."/>
            <person name="Raymond J."/>
            <person name="Wu M."/>
            <person name="Chatterji S."/>
            <person name="Ren Q."/>
            <person name="Graham J.E."/>
            <person name="Bryant D.A."/>
            <person name="Robb F."/>
            <person name="Colman A."/>
            <person name="Tallon L.J."/>
            <person name="Badger J.H."/>
            <person name="Madupu R."/>
            <person name="Ward N.L."/>
            <person name="Eisen J.A."/>
        </authorList>
    </citation>
    <scope>NUCLEOTIDE SEQUENCE [LARGE SCALE GENOMIC DNA]</scope>
    <source>
        <strain>ATCC 27502 / DSM 5159 / P-2</strain>
    </source>
</reference>
<name>RSMH_THERP</name>
<gene>
    <name evidence="1" type="primary">rsmH</name>
    <name type="synonym">mraW</name>
    <name type="ordered locus">trd_0056</name>
</gene>
<dbReference type="EC" id="2.1.1.199" evidence="1"/>
<dbReference type="EMBL" id="CP001275">
    <property type="protein sequence ID" value="ACM05553.1"/>
    <property type="molecule type" value="Genomic_DNA"/>
</dbReference>
<dbReference type="RefSeq" id="WP_012641470.1">
    <property type="nucleotide sequence ID" value="NC_011959.1"/>
</dbReference>
<dbReference type="SMR" id="B9L274"/>
<dbReference type="STRING" id="309801.trd_0056"/>
<dbReference type="KEGG" id="tro:trd_0056"/>
<dbReference type="eggNOG" id="COG0275">
    <property type="taxonomic scope" value="Bacteria"/>
</dbReference>
<dbReference type="HOGENOM" id="CLU_038422_3_0_0"/>
<dbReference type="OrthoDB" id="9806637at2"/>
<dbReference type="Proteomes" id="UP000000447">
    <property type="component" value="Chromosome"/>
</dbReference>
<dbReference type="GO" id="GO:0005737">
    <property type="term" value="C:cytoplasm"/>
    <property type="evidence" value="ECO:0007669"/>
    <property type="project" value="UniProtKB-SubCell"/>
</dbReference>
<dbReference type="GO" id="GO:0071424">
    <property type="term" value="F:rRNA (cytosine-N4-)-methyltransferase activity"/>
    <property type="evidence" value="ECO:0007669"/>
    <property type="project" value="UniProtKB-UniRule"/>
</dbReference>
<dbReference type="GO" id="GO:0070475">
    <property type="term" value="P:rRNA base methylation"/>
    <property type="evidence" value="ECO:0007669"/>
    <property type="project" value="UniProtKB-UniRule"/>
</dbReference>
<dbReference type="Gene3D" id="1.10.150.170">
    <property type="entry name" value="Putative methyltransferase TM0872, insert domain"/>
    <property type="match status" value="1"/>
</dbReference>
<dbReference type="Gene3D" id="3.40.50.150">
    <property type="entry name" value="Vaccinia Virus protein VP39"/>
    <property type="match status" value="1"/>
</dbReference>
<dbReference type="HAMAP" id="MF_01007">
    <property type="entry name" value="16SrRNA_methyltr_H"/>
    <property type="match status" value="1"/>
</dbReference>
<dbReference type="InterPro" id="IPR002903">
    <property type="entry name" value="RsmH"/>
</dbReference>
<dbReference type="InterPro" id="IPR023397">
    <property type="entry name" value="SAM-dep_MeTrfase_MraW_recog"/>
</dbReference>
<dbReference type="InterPro" id="IPR029063">
    <property type="entry name" value="SAM-dependent_MTases_sf"/>
</dbReference>
<dbReference type="NCBIfam" id="TIGR00006">
    <property type="entry name" value="16S rRNA (cytosine(1402)-N(4))-methyltransferase RsmH"/>
    <property type="match status" value="1"/>
</dbReference>
<dbReference type="PANTHER" id="PTHR11265:SF0">
    <property type="entry name" value="12S RRNA N4-METHYLCYTIDINE METHYLTRANSFERASE"/>
    <property type="match status" value="1"/>
</dbReference>
<dbReference type="PANTHER" id="PTHR11265">
    <property type="entry name" value="S-ADENOSYL-METHYLTRANSFERASE MRAW"/>
    <property type="match status" value="1"/>
</dbReference>
<dbReference type="Pfam" id="PF01795">
    <property type="entry name" value="Methyltransf_5"/>
    <property type="match status" value="1"/>
</dbReference>
<dbReference type="PIRSF" id="PIRSF004486">
    <property type="entry name" value="MraW"/>
    <property type="match status" value="1"/>
</dbReference>
<dbReference type="SUPFAM" id="SSF81799">
    <property type="entry name" value="Putative methyltransferase TM0872, insert domain"/>
    <property type="match status" value="1"/>
</dbReference>
<dbReference type="SUPFAM" id="SSF53335">
    <property type="entry name" value="S-adenosyl-L-methionine-dependent methyltransferases"/>
    <property type="match status" value="1"/>
</dbReference>
<accession>B9L274</accession>
<evidence type="ECO:0000255" key="1">
    <source>
        <dbReference type="HAMAP-Rule" id="MF_01007"/>
    </source>
</evidence>
<evidence type="ECO:0000256" key="2">
    <source>
        <dbReference type="SAM" id="MobiDB-lite"/>
    </source>
</evidence>
<feature type="chain" id="PRO_0000387190" description="Ribosomal RNA small subunit methyltransferase H">
    <location>
        <begin position="1"/>
        <end position="326"/>
    </location>
</feature>
<feature type="region of interest" description="Disordered" evidence="2">
    <location>
        <begin position="299"/>
        <end position="326"/>
    </location>
</feature>
<feature type="compositionally biased region" description="Basic and acidic residues" evidence="2">
    <location>
        <begin position="316"/>
        <end position="326"/>
    </location>
</feature>
<feature type="binding site" evidence="1">
    <location>
        <begin position="45"/>
        <end position="47"/>
    </location>
    <ligand>
        <name>S-adenosyl-L-methionine</name>
        <dbReference type="ChEBI" id="CHEBI:59789"/>
    </ligand>
</feature>
<feature type="binding site" evidence="1">
    <location>
        <position position="65"/>
    </location>
    <ligand>
        <name>S-adenosyl-L-methionine</name>
        <dbReference type="ChEBI" id="CHEBI:59789"/>
    </ligand>
</feature>
<feature type="binding site" evidence="1">
    <location>
        <position position="113"/>
    </location>
    <ligand>
        <name>S-adenosyl-L-methionine</name>
        <dbReference type="ChEBI" id="CHEBI:59789"/>
    </ligand>
</feature>
<feature type="binding site" evidence="1">
    <location>
        <position position="120"/>
    </location>
    <ligand>
        <name>S-adenosyl-L-methionine</name>
        <dbReference type="ChEBI" id="CHEBI:59789"/>
    </ligand>
</feature>
<proteinExistence type="inferred from homology"/>
<protein>
    <recommendedName>
        <fullName evidence="1">Ribosomal RNA small subunit methyltransferase H</fullName>
        <ecNumber evidence="1">2.1.1.199</ecNumber>
    </recommendedName>
    <alternativeName>
        <fullName evidence="1">16S rRNA m(4)C1402 methyltransferase</fullName>
    </alternativeName>
    <alternativeName>
        <fullName evidence="1">rRNA (cytosine-N(4)-)-methyltransferase RsmH</fullName>
    </alternativeName>
</protein>
<keyword id="KW-0963">Cytoplasm</keyword>
<keyword id="KW-0489">Methyltransferase</keyword>
<keyword id="KW-1185">Reference proteome</keyword>
<keyword id="KW-0698">rRNA processing</keyword>
<keyword id="KW-0949">S-adenosyl-L-methionine</keyword>
<keyword id="KW-0808">Transferase</keyword>
<sequence length="326" mass="35450">MSERARLALEDPLSTTHEPVLLSAALTFLAPRDGGRYIDATFGGGGHSRAILEASAPSGQVLAIDADPAAVARARALAERYPGRLLPCHGNFRDLARLAQSYGFVPVDGILFDLGLSSDQLADPARGFSFQLAGPLDMRFDPTSGEPAAVIVNTWSAEELAELFWQYGEEPRAWAIAQTIVAERARQPIETTTQLAALVARVAGSRRERIHPATRVFQALRIAVNQELEALAAGLAQAVELLRPGGRLVVIAFHSLEDRLVKQFFRREAAACLCPPGTPVCICGHRPRLRLLTPRPVRPSAEEITRNPRSRSARLRAAERIAHDGR</sequence>
<organism>
    <name type="scientific">Thermomicrobium roseum (strain ATCC 27502 / DSM 5159 / P-2)</name>
    <dbReference type="NCBI Taxonomy" id="309801"/>
    <lineage>
        <taxon>Bacteria</taxon>
        <taxon>Pseudomonadati</taxon>
        <taxon>Thermomicrobiota</taxon>
        <taxon>Thermomicrobia</taxon>
        <taxon>Thermomicrobiales</taxon>
        <taxon>Thermomicrobiaceae</taxon>
        <taxon>Thermomicrobium</taxon>
    </lineage>
</organism>